<organism>
    <name type="scientific">Neosartorya fischeri (strain ATCC 1020 / DSM 3700 / CBS 544.65 / FGSC A1164 / JCM 1740 / NRRL 181 / WB 181)</name>
    <name type="common">Aspergillus fischerianus</name>
    <dbReference type="NCBI Taxonomy" id="331117"/>
    <lineage>
        <taxon>Eukaryota</taxon>
        <taxon>Fungi</taxon>
        <taxon>Dikarya</taxon>
        <taxon>Ascomycota</taxon>
        <taxon>Pezizomycotina</taxon>
        <taxon>Eurotiomycetes</taxon>
        <taxon>Eurotiomycetidae</taxon>
        <taxon>Eurotiales</taxon>
        <taxon>Aspergillaceae</taxon>
        <taxon>Aspergillus</taxon>
        <taxon>Aspergillus subgen. Fumigati</taxon>
    </lineage>
</organism>
<reference key="1">
    <citation type="journal article" date="2008" name="PLoS Genet.">
        <title>Genomic islands in the pathogenic filamentous fungus Aspergillus fumigatus.</title>
        <authorList>
            <person name="Fedorova N.D."/>
            <person name="Khaldi N."/>
            <person name="Joardar V.S."/>
            <person name="Maiti R."/>
            <person name="Amedeo P."/>
            <person name="Anderson M.J."/>
            <person name="Crabtree J."/>
            <person name="Silva J.C."/>
            <person name="Badger J.H."/>
            <person name="Albarraq A."/>
            <person name="Angiuoli S."/>
            <person name="Bussey H."/>
            <person name="Bowyer P."/>
            <person name="Cotty P.J."/>
            <person name="Dyer P.S."/>
            <person name="Egan A."/>
            <person name="Galens K."/>
            <person name="Fraser-Liggett C.M."/>
            <person name="Haas B.J."/>
            <person name="Inman J.M."/>
            <person name="Kent R."/>
            <person name="Lemieux S."/>
            <person name="Malavazi I."/>
            <person name="Orvis J."/>
            <person name="Roemer T."/>
            <person name="Ronning C.M."/>
            <person name="Sundaram J.P."/>
            <person name="Sutton G."/>
            <person name="Turner G."/>
            <person name="Venter J.C."/>
            <person name="White O.R."/>
            <person name="Whitty B.R."/>
            <person name="Youngman P."/>
            <person name="Wolfe K.H."/>
            <person name="Goldman G.H."/>
            <person name="Wortman J.R."/>
            <person name="Jiang B."/>
            <person name="Denning D.W."/>
            <person name="Nierman W.C."/>
        </authorList>
    </citation>
    <scope>NUCLEOTIDE SEQUENCE [LARGE SCALE GENOMIC DNA]</scope>
    <source>
        <strain>ATCC 1020 / DSM 3700 / CBS 544.65 / FGSC A1164 / JCM 1740 / NRRL 181 / WB 181</strain>
    </source>
</reference>
<sequence length="841" mass="92648">MSSIARPPDPCLVAIILIVRSRAGPRFVFHYPPNPLSENGLRPVRKERRTSRSKNGQGYKSNESSSSEESGSSSDDDEDEHQRQLQSQNQSQSHLSGSVVSGRRSSNFGLDDHVAMSVSPGGDSQRAGSMGSGRTSFRKRGGNSDVEEDSGAASDRQEDGSGGAGGPYRPPWESLLGLPADVWEKLLSPSPAWHKRRFEVGINDLAFIGWPVFVREDGTWRKQRRKKKKKWRAEWEGGELGHNENAEDAPDDEDGDAGGNASGGGGLMAASTETLSPKQMALSEAKRGSGSSSKAARSSVDCLDGDDKDSMTMFNVVFVLDPPLLEYSMRTREIYDNIIKKFAKALKWEQARTDYVWREAQHISHLKEKAKERRTSLNTLYTELINQSSLARAIYTVYTSISASKIASVQLSPDVSISLQIPPLTSTPYLPGPTDKAYPGLWLTTADSVTPVEDPTADENTAPHQVLAKHFALLLLDNEAAILKDVEASGGALAPALAHYLRCSKPTKSFAQISASSGIPLSTIQMLASHLVYWRRARAIPPIHQRDTYIVSPNCDLSKLEIATAAYQVAFPTLPSLPKMLSALSGTPRPYGSFIPSKDHKETYFAILAWLLRGGWVTQLRSFARVKVTPEIKMAVEVALRREEVDKYLRKGRSLEAQKSADGENGNEADENDDASSSSSSSLASQGSGDETPMPGRYQQESNLRLSHSMLDRNTSLRTSSLILFPHRASPLESRWLEQIVSRFPEHPRTAGRHRRGEGSNAAGGEIDPEYAALSTPMKDLWPTYIKYFNGLDALEKIPVREGLKRKLVWQVLTRLGLVTSQQSSIELDPREQVLVSVRHW</sequence>
<gene>
    <name type="primary">npr3</name>
    <name type="synonym">rmd11</name>
    <name type="ORF">NFIA_015860</name>
</gene>
<proteinExistence type="inferred from homology"/>
<dbReference type="EMBL" id="DS027688">
    <property type="protein sequence ID" value="EAW22893.1"/>
    <property type="molecule type" value="Genomic_DNA"/>
</dbReference>
<dbReference type="RefSeq" id="XP_001264790.1">
    <property type="nucleotide sequence ID" value="XM_001264789.1"/>
</dbReference>
<dbReference type="SMR" id="A1D3A0"/>
<dbReference type="STRING" id="331117.A1D3A0"/>
<dbReference type="EnsemblFungi" id="EAW22893">
    <property type="protein sequence ID" value="EAW22893"/>
    <property type="gene ID" value="NFIA_015860"/>
</dbReference>
<dbReference type="GeneID" id="4591740"/>
<dbReference type="KEGG" id="nfi:NFIA_015860"/>
<dbReference type="VEuPathDB" id="FungiDB:NFIA_015860"/>
<dbReference type="eggNOG" id="KOG3830">
    <property type="taxonomic scope" value="Eukaryota"/>
</dbReference>
<dbReference type="HOGENOM" id="CLU_014314_1_0_1"/>
<dbReference type="OMA" id="RTDYVWK"/>
<dbReference type="OrthoDB" id="18648at2759"/>
<dbReference type="Proteomes" id="UP000006702">
    <property type="component" value="Unassembled WGS sequence"/>
</dbReference>
<dbReference type="GO" id="GO:1990130">
    <property type="term" value="C:GATOR1 complex"/>
    <property type="evidence" value="ECO:0007669"/>
    <property type="project" value="TreeGrafter"/>
</dbReference>
<dbReference type="GO" id="GO:0034198">
    <property type="term" value="P:cellular response to amino acid starvation"/>
    <property type="evidence" value="ECO:0007669"/>
    <property type="project" value="TreeGrafter"/>
</dbReference>
<dbReference type="GO" id="GO:0051321">
    <property type="term" value="P:meiotic cell cycle"/>
    <property type="evidence" value="ECO:0007669"/>
    <property type="project" value="UniProtKB-KW"/>
</dbReference>
<dbReference type="GO" id="GO:1904262">
    <property type="term" value="P:negative regulation of TORC1 signaling"/>
    <property type="evidence" value="ECO:0007669"/>
    <property type="project" value="TreeGrafter"/>
</dbReference>
<dbReference type="GO" id="GO:0010508">
    <property type="term" value="P:positive regulation of autophagy"/>
    <property type="evidence" value="ECO:0007669"/>
    <property type="project" value="TreeGrafter"/>
</dbReference>
<dbReference type="GO" id="GO:0038202">
    <property type="term" value="P:TORC1 signaling"/>
    <property type="evidence" value="ECO:0007669"/>
    <property type="project" value="TreeGrafter"/>
</dbReference>
<dbReference type="InterPro" id="IPR056603">
    <property type="entry name" value="HTH_NPRL3"/>
</dbReference>
<dbReference type="InterPro" id="IPR005365">
    <property type="entry name" value="Npr3"/>
</dbReference>
<dbReference type="PANTHER" id="PTHR13153">
    <property type="entry name" value="CGTHBA PROTEIN -14 GENE PROTEIN"/>
    <property type="match status" value="1"/>
</dbReference>
<dbReference type="PANTHER" id="PTHR13153:SF5">
    <property type="entry name" value="GATOR COMPLEX PROTEIN NPRL3"/>
    <property type="match status" value="1"/>
</dbReference>
<dbReference type="Pfam" id="PF24064">
    <property type="entry name" value="HTH_NPRL3"/>
    <property type="match status" value="1"/>
</dbReference>
<dbReference type="Pfam" id="PF03666">
    <property type="entry name" value="NPR3"/>
    <property type="match status" value="1"/>
</dbReference>
<protein>
    <recommendedName>
        <fullName>Nitrogen permease regulator 3</fullName>
    </recommendedName>
    <alternativeName>
        <fullName>Required for meiotic nuclear division protein 11</fullName>
    </alternativeName>
</protein>
<comment type="function">
    <text evidence="1">Mediates inactivation of the TORC1 complex in response to amino acid starvation. Required for meiotic nuclear division (By similarity).</text>
</comment>
<comment type="similarity">
    <text evidence="4">Belongs to the NPR3 family.</text>
</comment>
<name>NPR3_NEOFI</name>
<evidence type="ECO:0000250" key="1"/>
<evidence type="ECO:0000255" key="2"/>
<evidence type="ECO:0000256" key="3">
    <source>
        <dbReference type="SAM" id="MobiDB-lite"/>
    </source>
</evidence>
<evidence type="ECO:0000305" key="4"/>
<accession>A1D3A0</accession>
<keyword id="KW-0469">Meiosis</keyword>
<keyword id="KW-1185">Reference proteome</keyword>
<keyword id="KW-0732">Signal</keyword>
<feature type="signal peptide" evidence="2">
    <location>
        <begin position="1"/>
        <end position="23"/>
    </location>
</feature>
<feature type="chain" id="PRO_0000301803" description="Nitrogen permease regulator 3">
    <location>
        <begin position="24"/>
        <end position="841"/>
    </location>
</feature>
<feature type="region of interest" description="Disordered" evidence="3">
    <location>
        <begin position="30"/>
        <end position="172"/>
    </location>
</feature>
<feature type="region of interest" description="Disordered" evidence="3">
    <location>
        <begin position="221"/>
        <end position="301"/>
    </location>
</feature>
<feature type="region of interest" description="Disordered" evidence="3">
    <location>
        <begin position="656"/>
        <end position="698"/>
    </location>
</feature>
<feature type="compositionally biased region" description="Basic residues" evidence="3">
    <location>
        <begin position="43"/>
        <end position="52"/>
    </location>
</feature>
<feature type="compositionally biased region" description="Low complexity" evidence="3">
    <location>
        <begin position="61"/>
        <end position="73"/>
    </location>
</feature>
<feature type="compositionally biased region" description="Low complexity" evidence="3">
    <location>
        <begin position="84"/>
        <end position="106"/>
    </location>
</feature>
<feature type="compositionally biased region" description="Basic residues" evidence="3">
    <location>
        <begin position="221"/>
        <end position="231"/>
    </location>
</feature>
<feature type="compositionally biased region" description="Basic and acidic residues" evidence="3">
    <location>
        <begin position="232"/>
        <end position="245"/>
    </location>
</feature>
<feature type="compositionally biased region" description="Acidic residues" evidence="3">
    <location>
        <begin position="246"/>
        <end position="256"/>
    </location>
</feature>
<feature type="compositionally biased region" description="Gly residues" evidence="3">
    <location>
        <begin position="257"/>
        <end position="267"/>
    </location>
</feature>
<feature type="compositionally biased region" description="Low complexity" evidence="3">
    <location>
        <begin position="288"/>
        <end position="299"/>
    </location>
</feature>
<feature type="compositionally biased region" description="Acidic residues" evidence="3">
    <location>
        <begin position="665"/>
        <end position="674"/>
    </location>
</feature>
<feature type="compositionally biased region" description="Low complexity" evidence="3">
    <location>
        <begin position="675"/>
        <end position="689"/>
    </location>
</feature>